<reference key="1">
    <citation type="journal article" date="2009" name="BMC Genomics">
        <title>Pseudogene accumulation in the evolutionary histories of Salmonella enterica serovars Paratyphi A and Typhi.</title>
        <authorList>
            <person name="Holt K.E."/>
            <person name="Thomson N.R."/>
            <person name="Wain J."/>
            <person name="Langridge G.C."/>
            <person name="Hasan R."/>
            <person name="Bhutta Z.A."/>
            <person name="Quail M.A."/>
            <person name="Norbertczak H."/>
            <person name="Walker D."/>
            <person name="Simmonds M."/>
            <person name="White B."/>
            <person name="Bason N."/>
            <person name="Mungall K."/>
            <person name="Dougan G."/>
            <person name="Parkhill J."/>
        </authorList>
    </citation>
    <scope>NUCLEOTIDE SEQUENCE [LARGE SCALE GENOMIC DNA]</scope>
    <source>
        <strain>AKU_12601</strain>
    </source>
</reference>
<dbReference type="EC" id="2.5.1.75" evidence="1"/>
<dbReference type="EMBL" id="FM200053">
    <property type="protein sequence ID" value="CAR62164.1"/>
    <property type="status" value="ALT_INIT"/>
    <property type="molecule type" value="Genomic_DNA"/>
</dbReference>
<dbReference type="RefSeq" id="WP_001000735.1">
    <property type="nucleotide sequence ID" value="NC_011147.1"/>
</dbReference>
<dbReference type="SMR" id="B5BKI0"/>
<dbReference type="KEGG" id="sek:SSPA3877"/>
<dbReference type="HOGENOM" id="CLU_032616_0_0_6"/>
<dbReference type="Proteomes" id="UP000001869">
    <property type="component" value="Chromosome"/>
</dbReference>
<dbReference type="GO" id="GO:0005524">
    <property type="term" value="F:ATP binding"/>
    <property type="evidence" value="ECO:0007669"/>
    <property type="project" value="UniProtKB-UniRule"/>
</dbReference>
<dbReference type="GO" id="GO:0052381">
    <property type="term" value="F:tRNA dimethylallyltransferase activity"/>
    <property type="evidence" value="ECO:0007669"/>
    <property type="project" value="UniProtKB-UniRule"/>
</dbReference>
<dbReference type="GO" id="GO:0006400">
    <property type="term" value="P:tRNA modification"/>
    <property type="evidence" value="ECO:0007669"/>
    <property type="project" value="TreeGrafter"/>
</dbReference>
<dbReference type="FunFam" id="1.10.20.140:FF:000001">
    <property type="entry name" value="tRNA dimethylallyltransferase"/>
    <property type="match status" value="1"/>
</dbReference>
<dbReference type="Gene3D" id="1.10.20.140">
    <property type="match status" value="1"/>
</dbReference>
<dbReference type="Gene3D" id="3.40.50.300">
    <property type="entry name" value="P-loop containing nucleotide triphosphate hydrolases"/>
    <property type="match status" value="1"/>
</dbReference>
<dbReference type="HAMAP" id="MF_00185">
    <property type="entry name" value="IPP_trans"/>
    <property type="match status" value="1"/>
</dbReference>
<dbReference type="InterPro" id="IPR039657">
    <property type="entry name" value="Dimethylallyltransferase"/>
</dbReference>
<dbReference type="InterPro" id="IPR018022">
    <property type="entry name" value="IPT"/>
</dbReference>
<dbReference type="InterPro" id="IPR027417">
    <property type="entry name" value="P-loop_NTPase"/>
</dbReference>
<dbReference type="NCBIfam" id="TIGR00174">
    <property type="entry name" value="miaA"/>
    <property type="match status" value="1"/>
</dbReference>
<dbReference type="PANTHER" id="PTHR11088">
    <property type="entry name" value="TRNA DIMETHYLALLYLTRANSFERASE"/>
    <property type="match status" value="1"/>
</dbReference>
<dbReference type="PANTHER" id="PTHR11088:SF60">
    <property type="entry name" value="TRNA DIMETHYLALLYLTRANSFERASE"/>
    <property type="match status" value="1"/>
</dbReference>
<dbReference type="Pfam" id="PF01715">
    <property type="entry name" value="IPPT"/>
    <property type="match status" value="1"/>
</dbReference>
<dbReference type="SUPFAM" id="SSF52540">
    <property type="entry name" value="P-loop containing nucleoside triphosphate hydrolases"/>
    <property type="match status" value="1"/>
</dbReference>
<gene>
    <name evidence="1" type="primary">miaA</name>
    <name type="ordered locus">SSPA3877</name>
</gene>
<accession>B5BKI0</accession>
<protein>
    <recommendedName>
        <fullName evidence="1">tRNA dimethylallyltransferase</fullName>
        <ecNumber evidence="1">2.5.1.75</ecNumber>
    </recommendedName>
    <alternativeName>
        <fullName evidence="1">Dimethylallyl diphosphate:tRNA dimethylallyltransferase</fullName>
        <shortName evidence="1">DMAPP:tRNA dimethylallyltransferase</shortName>
        <shortName evidence="1">DMATase</shortName>
    </alternativeName>
    <alternativeName>
        <fullName evidence="1">Isopentenyl-diphosphate:tRNA isopentenyltransferase</fullName>
        <shortName evidence="1">IPP transferase</shortName>
        <shortName evidence="1">IPPT</shortName>
        <shortName evidence="1">IPTase</shortName>
    </alternativeName>
</protein>
<sequence>MNDVSKASLPKAIFLMGPTASGKTALAIELRKVLPVELISVDSALIYRGMDIGTAKPNADELKAAPHRLLDIRDPSQAYSAADFRRDALAQMAEITSAGRIPLLVGGTMLYFKALLEGLSPLPSADPEVRSRIEQQAAELGWEALHQQLQEIDPVAAARIHPNDPQRLSRALEVFFISGKTLTELTQTSGDALPYQVHQFAIAPASRELLHQRIELRFHQMLASGFEAEVRALFARGDLHTDLPSIRCVGYRQMWSYIEGEISYDEMVYRGVCATRQLAKRQMTWLRGWEGGRWLDSENPDRARKEVLQVVGAIAD</sequence>
<name>MIAA_SALPK</name>
<keyword id="KW-0067">ATP-binding</keyword>
<keyword id="KW-0460">Magnesium</keyword>
<keyword id="KW-0547">Nucleotide-binding</keyword>
<keyword id="KW-0808">Transferase</keyword>
<keyword id="KW-0819">tRNA processing</keyword>
<feature type="chain" id="PRO_0000377307" description="tRNA dimethylallyltransferase">
    <location>
        <begin position="1"/>
        <end position="316"/>
    </location>
</feature>
<feature type="region of interest" description="Interaction with substrate tRNA" evidence="1">
    <location>
        <begin position="42"/>
        <end position="45"/>
    </location>
</feature>
<feature type="region of interest" description="Interaction with substrate tRNA" evidence="1">
    <location>
        <begin position="166"/>
        <end position="170"/>
    </location>
</feature>
<feature type="region of interest" description="Interaction with substrate tRNA" evidence="1">
    <location>
        <begin position="247"/>
        <end position="252"/>
    </location>
</feature>
<feature type="binding site" evidence="1">
    <location>
        <begin position="17"/>
        <end position="24"/>
    </location>
    <ligand>
        <name>ATP</name>
        <dbReference type="ChEBI" id="CHEBI:30616"/>
    </ligand>
</feature>
<feature type="binding site" evidence="1">
    <location>
        <begin position="19"/>
        <end position="24"/>
    </location>
    <ligand>
        <name>substrate</name>
    </ligand>
</feature>
<feature type="site" description="Interaction with substrate tRNA" evidence="1">
    <location>
        <position position="108"/>
    </location>
</feature>
<feature type="site" description="Interaction with substrate tRNA" evidence="1">
    <location>
        <position position="130"/>
    </location>
</feature>
<evidence type="ECO:0000255" key="1">
    <source>
        <dbReference type="HAMAP-Rule" id="MF_00185"/>
    </source>
</evidence>
<evidence type="ECO:0000305" key="2"/>
<comment type="function">
    <text evidence="1">Catalyzes the transfer of a dimethylallyl group onto the adenine at position 37 in tRNAs that read codons beginning with uridine, leading to the formation of N6-(dimethylallyl)adenosine (i(6)A).</text>
</comment>
<comment type="catalytic activity">
    <reaction evidence="1">
        <text>adenosine(37) in tRNA + dimethylallyl diphosphate = N(6)-dimethylallyladenosine(37) in tRNA + diphosphate</text>
        <dbReference type="Rhea" id="RHEA:26482"/>
        <dbReference type="Rhea" id="RHEA-COMP:10162"/>
        <dbReference type="Rhea" id="RHEA-COMP:10375"/>
        <dbReference type="ChEBI" id="CHEBI:33019"/>
        <dbReference type="ChEBI" id="CHEBI:57623"/>
        <dbReference type="ChEBI" id="CHEBI:74411"/>
        <dbReference type="ChEBI" id="CHEBI:74415"/>
        <dbReference type="EC" id="2.5.1.75"/>
    </reaction>
</comment>
<comment type="cofactor">
    <cofactor evidence="1">
        <name>Mg(2+)</name>
        <dbReference type="ChEBI" id="CHEBI:18420"/>
    </cofactor>
</comment>
<comment type="subunit">
    <text evidence="1">Monomer.</text>
</comment>
<comment type="similarity">
    <text evidence="1">Belongs to the IPP transferase family.</text>
</comment>
<comment type="sequence caution" evidence="2">
    <conflict type="erroneous initiation">
        <sequence resource="EMBL-CDS" id="CAR62164"/>
    </conflict>
</comment>
<proteinExistence type="inferred from homology"/>
<organism>
    <name type="scientific">Salmonella paratyphi A (strain AKU_12601)</name>
    <dbReference type="NCBI Taxonomy" id="554290"/>
    <lineage>
        <taxon>Bacteria</taxon>
        <taxon>Pseudomonadati</taxon>
        <taxon>Pseudomonadota</taxon>
        <taxon>Gammaproteobacteria</taxon>
        <taxon>Enterobacterales</taxon>
        <taxon>Enterobacteriaceae</taxon>
        <taxon>Salmonella</taxon>
    </lineage>
</organism>